<comment type="function">
    <text evidence="1">Required for maturation of 30S ribosomal subunits.</text>
</comment>
<comment type="subcellular location">
    <subcellularLocation>
        <location evidence="1">Cytoplasm</location>
    </subcellularLocation>
</comment>
<comment type="similarity">
    <text evidence="1">Belongs to the RimP family.</text>
</comment>
<sequence>MTGLERQLTEMLEAPVVAAGYELVGLEFVRAGQHSTLRIFIDHENGITVEDCAEVSRQVSAVLDVEDPISVVYNLEVSSPGLERPLFKAAHYEQFIGHEVSIVLKMAVGNRRKWKGVIQSIDGETVAVMVDGQEEHFALSNISKANLIPKF</sequence>
<name>RIMP_VIBCM</name>
<evidence type="ECO:0000255" key="1">
    <source>
        <dbReference type="HAMAP-Rule" id="MF_01077"/>
    </source>
</evidence>
<feature type="chain" id="PRO_1000149811" description="Ribosome maturation factor RimP">
    <location>
        <begin position="1"/>
        <end position="151"/>
    </location>
</feature>
<gene>
    <name evidence="1" type="primary">rimP</name>
    <name type="ordered locus">VCM66_0599</name>
</gene>
<reference key="1">
    <citation type="journal article" date="2008" name="PLoS ONE">
        <title>A recalibrated molecular clock and independent origins for the cholera pandemic clones.</title>
        <authorList>
            <person name="Feng L."/>
            <person name="Reeves P.R."/>
            <person name="Lan R."/>
            <person name="Ren Y."/>
            <person name="Gao C."/>
            <person name="Zhou Z."/>
            <person name="Ren Y."/>
            <person name="Cheng J."/>
            <person name="Wang W."/>
            <person name="Wang J."/>
            <person name="Qian W."/>
            <person name="Li D."/>
            <person name="Wang L."/>
        </authorList>
    </citation>
    <scope>NUCLEOTIDE SEQUENCE [LARGE SCALE GENOMIC DNA]</scope>
    <source>
        <strain>M66-2</strain>
    </source>
</reference>
<dbReference type="EMBL" id="CP001233">
    <property type="protein sequence ID" value="ACP04922.1"/>
    <property type="molecule type" value="Genomic_DNA"/>
</dbReference>
<dbReference type="RefSeq" id="WP_000147148.1">
    <property type="nucleotide sequence ID" value="NC_012578.1"/>
</dbReference>
<dbReference type="SMR" id="C3LSP6"/>
<dbReference type="GeneID" id="69720603"/>
<dbReference type="KEGG" id="vcm:VCM66_0599"/>
<dbReference type="HOGENOM" id="CLU_070525_1_1_6"/>
<dbReference type="Proteomes" id="UP000001217">
    <property type="component" value="Chromosome I"/>
</dbReference>
<dbReference type="GO" id="GO:0005829">
    <property type="term" value="C:cytosol"/>
    <property type="evidence" value="ECO:0007669"/>
    <property type="project" value="TreeGrafter"/>
</dbReference>
<dbReference type="GO" id="GO:0000028">
    <property type="term" value="P:ribosomal small subunit assembly"/>
    <property type="evidence" value="ECO:0007669"/>
    <property type="project" value="TreeGrafter"/>
</dbReference>
<dbReference type="GO" id="GO:0006412">
    <property type="term" value="P:translation"/>
    <property type="evidence" value="ECO:0007669"/>
    <property type="project" value="TreeGrafter"/>
</dbReference>
<dbReference type="CDD" id="cd01734">
    <property type="entry name" value="YlxS_C"/>
    <property type="match status" value="1"/>
</dbReference>
<dbReference type="FunFam" id="2.30.30.180:FF:000001">
    <property type="entry name" value="Ribosome maturation factor RimP"/>
    <property type="match status" value="1"/>
</dbReference>
<dbReference type="FunFam" id="3.30.300.70:FF:000001">
    <property type="entry name" value="Ribosome maturation factor RimP"/>
    <property type="match status" value="1"/>
</dbReference>
<dbReference type="Gene3D" id="2.30.30.180">
    <property type="entry name" value="Ribosome maturation factor RimP, C-terminal domain"/>
    <property type="match status" value="1"/>
</dbReference>
<dbReference type="Gene3D" id="3.30.300.70">
    <property type="entry name" value="RimP-like superfamily, N-terminal"/>
    <property type="match status" value="1"/>
</dbReference>
<dbReference type="HAMAP" id="MF_01077">
    <property type="entry name" value="RimP"/>
    <property type="match status" value="1"/>
</dbReference>
<dbReference type="InterPro" id="IPR003728">
    <property type="entry name" value="Ribosome_maturation_RimP"/>
</dbReference>
<dbReference type="InterPro" id="IPR028998">
    <property type="entry name" value="RimP_C"/>
</dbReference>
<dbReference type="InterPro" id="IPR036847">
    <property type="entry name" value="RimP_C_sf"/>
</dbReference>
<dbReference type="InterPro" id="IPR028989">
    <property type="entry name" value="RimP_N"/>
</dbReference>
<dbReference type="InterPro" id="IPR035956">
    <property type="entry name" value="RimP_N_sf"/>
</dbReference>
<dbReference type="NCBIfam" id="NF000927">
    <property type="entry name" value="PRK00092.1-1"/>
    <property type="match status" value="1"/>
</dbReference>
<dbReference type="PANTHER" id="PTHR33867">
    <property type="entry name" value="RIBOSOME MATURATION FACTOR RIMP"/>
    <property type="match status" value="1"/>
</dbReference>
<dbReference type="PANTHER" id="PTHR33867:SF1">
    <property type="entry name" value="RIBOSOME MATURATION FACTOR RIMP"/>
    <property type="match status" value="1"/>
</dbReference>
<dbReference type="Pfam" id="PF17384">
    <property type="entry name" value="DUF150_C"/>
    <property type="match status" value="1"/>
</dbReference>
<dbReference type="Pfam" id="PF02576">
    <property type="entry name" value="RimP_N"/>
    <property type="match status" value="1"/>
</dbReference>
<dbReference type="SUPFAM" id="SSF74942">
    <property type="entry name" value="YhbC-like, C-terminal domain"/>
    <property type="match status" value="1"/>
</dbReference>
<dbReference type="SUPFAM" id="SSF75420">
    <property type="entry name" value="YhbC-like, N-terminal domain"/>
    <property type="match status" value="1"/>
</dbReference>
<proteinExistence type="inferred from homology"/>
<accession>C3LSP6</accession>
<keyword id="KW-0963">Cytoplasm</keyword>
<keyword id="KW-0690">Ribosome biogenesis</keyword>
<organism>
    <name type="scientific">Vibrio cholerae serotype O1 (strain M66-2)</name>
    <dbReference type="NCBI Taxonomy" id="579112"/>
    <lineage>
        <taxon>Bacteria</taxon>
        <taxon>Pseudomonadati</taxon>
        <taxon>Pseudomonadota</taxon>
        <taxon>Gammaproteobacteria</taxon>
        <taxon>Vibrionales</taxon>
        <taxon>Vibrionaceae</taxon>
        <taxon>Vibrio</taxon>
    </lineage>
</organism>
<protein>
    <recommendedName>
        <fullName evidence="1">Ribosome maturation factor RimP</fullName>
    </recommendedName>
</protein>